<sequence length="176" mass="19093">MTTIVSVRRNGHVVIAGDGQATLGNTVMKGNVKKVRRLYNDKVIAGFAGGTADAFTLFELFERKLEMHQGHLVKAAVELAKDWRTDRMLRKLEALLAVADETASLIITGNGDVVQPENDLIAIGSGGPYAQAAARALLENTELSAREIAEKALDIAGDICIYTNHFHTIEELSYKA</sequence>
<dbReference type="EC" id="3.4.25.2" evidence="1"/>
<dbReference type="EMBL" id="CP000946">
    <property type="protein sequence ID" value="ACA79684.1"/>
    <property type="molecule type" value="Genomic_DNA"/>
</dbReference>
<dbReference type="RefSeq" id="WP_000208242.1">
    <property type="nucleotide sequence ID" value="NZ_MTFT01000008.1"/>
</dbReference>
<dbReference type="SMR" id="B1IVE7"/>
<dbReference type="MEROPS" id="T01.006"/>
<dbReference type="GeneID" id="93777966"/>
<dbReference type="KEGG" id="ecl:EcolC_4086"/>
<dbReference type="HOGENOM" id="CLU_093872_1_0_6"/>
<dbReference type="GO" id="GO:0009376">
    <property type="term" value="C:HslUV protease complex"/>
    <property type="evidence" value="ECO:0007669"/>
    <property type="project" value="UniProtKB-UniRule"/>
</dbReference>
<dbReference type="GO" id="GO:0005839">
    <property type="term" value="C:proteasome core complex"/>
    <property type="evidence" value="ECO:0007669"/>
    <property type="project" value="InterPro"/>
</dbReference>
<dbReference type="GO" id="GO:0046872">
    <property type="term" value="F:metal ion binding"/>
    <property type="evidence" value="ECO:0007669"/>
    <property type="project" value="UniProtKB-KW"/>
</dbReference>
<dbReference type="GO" id="GO:0004298">
    <property type="term" value="F:threonine-type endopeptidase activity"/>
    <property type="evidence" value="ECO:0007669"/>
    <property type="project" value="UniProtKB-KW"/>
</dbReference>
<dbReference type="GO" id="GO:0051603">
    <property type="term" value="P:proteolysis involved in protein catabolic process"/>
    <property type="evidence" value="ECO:0007669"/>
    <property type="project" value="InterPro"/>
</dbReference>
<dbReference type="CDD" id="cd01913">
    <property type="entry name" value="protease_HslV"/>
    <property type="match status" value="1"/>
</dbReference>
<dbReference type="FunFam" id="3.60.20.10:FF:000002">
    <property type="entry name" value="ATP-dependent protease subunit HslV"/>
    <property type="match status" value="1"/>
</dbReference>
<dbReference type="Gene3D" id="3.60.20.10">
    <property type="entry name" value="Glutamine Phosphoribosylpyrophosphate, subunit 1, domain 1"/>
    <property type="match status" value="1"/>
</dbReference>
<dbReference type="HAMAP" id="MF_00248">
    <property type="entry name" value="HslV"/>
    <property type="match status" value="1"/>
</dbReference>
<dbReference type="InterPro" id="IPR022281">
    <property type="entry name" value="ATP-dep_Prtase_HsIV_su"/>
</dbReference>
<dbReference type="InterPro" id="IPR029055">
    <property type="entry name" value="Ntn_hydrolases_N"/>
</dbReference>
<dbReference type="InterPro" id="IPR001353">
    <property type="entry name" value="Proteasome_sua/b"/>
</dbReference>
<dbReference type="InterPro" id="IPR023333">
    <property type="entry name" value="Proteasome_suB-type"/>
</dbReference>
<dbReference type="NCBIfam" id="TIGR03692">
    <property type="entry name" value="ATP_dep_HslV"/>
    <property type="match status" value="1"/>
</dbReference>
<dbReference type="NCBIfam" id="NF003964">
    <property type="entry name" value="PRK05456.1"/>
    <property type="match status" value="1"/>
</dbReference>
<dbReference type="PANTHER" id="PTHR32194:SF0">
    <property type="entry name" value="ATP-DEPENDENT PROTEASE SUBUNIT HSLV"/>
    <property type="match status" value="1"/>
</dbReference>
<dbReference type="PANTHER" id="PTHR32194">
    <property type="entry name" value="METALLOPROTEASE TLDD"/>
    <property type="match status" value="1"/>
</dbReference>
<dbReference type="Pfam" id="PF00227">
    <property type="entry name" value="Proteasome"/>
    <property type="match status" value="1"/>
</dbReference>
<dbReference type="PIRSF" id="PIRSF039093">
    <property type="entry name" value="HslV"/>
    <property type="match status" value="1"/>
</dbReference>
<dbReference type="SUPFAM" id="SSF56235">
    <property type="entry name" value="N-terminal nucleophile aminohydrolases (Ntn hydrolases)"/>
    <property type="match status" value="1"/>
</dbReference>
<dbReference type="PROSITE" id="PS51476">
    <property type="entry name" value="PROTEASOME_BETA_2"/>
    <property type="match status" value="1"/>
</dbReference>
<comment type="function">
    <text evidence="1">Protease subunit of a proteasome-like degradation complex believed to be a general protein degrading machinery.</text>
</comment>
<comment type="catalytic activity">
    <reaction evidence="1">
        <text>ATP-dependent cleavage of peptide bonds with broad specificity.</text>
        <dbReference type="EC" id="3.4.25.2"/>
    </reaction>
</comment>
<comment type="activity regulation">
    <text evidence="1">Allosterically activated by HslU binding.</text>
</comment>
<comment type="subunit">
    <text evidence="1">A double ring-shaped homohexamer of HslV is capped on each side by a ring-shaped HslU homohexamer. The assembly of the HslU/HslV complex is dependent on binding of ATP.</text>
</comment>
<comment type="subcellular location">
    <subcellularLocation>
        <location evidence="1">Cytoplasm</location>
    </subcellularLocation>
</comment>
<comment type="induction">
    <text evidence="1">By heat shock.</text>
</comment>
<comment type="similarity">
    <text evidence="1">Belongs to the peptidase T1B family. HslV subfamily.</text>
</comment>
<organism>
    <name type="scientific">Escherichia coli (strain ATCC 8739 / DSM 1576 / NBRC 3972 / NCIMB 8545 / WDCM 00012 / Crooks)</name>
    <dbReference type="NCBI Taxonomy" id="481805"/>
    <lineage>
        <taxon>Bacteria</taxon>
        <taxon>Pseudomonadati</taxon>
        <taxon>Pseudomonadota</taxon>
        <taxon>Gammaproteobacteria</taxon>
        <taxon>Enterobacterales</taxon>
        <taxon>Enterobacteriaceae</taxon>
        <taxon>Escherichia</taxon>
    </lineage>
</organism>
<keyword id="KW-0021">Allosteric enzyme</keyword>
<keyword id="KW-0963">Cytoplasm</keyword>
<keyword id="KW-0378">Hydrolase</keyword>
<keyword id="KW-0479">Metal-binding</keyword>
<keyword id="KW-0645">Protease</keyword>
<keyword id="KW-0915">Sodium</keyword>
<keyword id="KW-0346">Stress response</keyword>
<keyword id="KW-0888">Threonine protease</keyword>
<gene>
    <name evidence="1" type="primary">hslV</name>
    <name type="ordered locus">EcolC_4086</name>
</gene>
<name>HSLV_ECOLC</name>
<feature type="chain" id="PRO_1000078420" description="ATP-dependent protease subunit HslV">
    <location>
        <begin position="1"/>
        <end position="176"/>
    </location>
</feature>
<feature type="active site" evidence="1">
    <location>
        <position position="2"/>
    </location>
</feature>
<feature type="binding site" evidence="1">
    <location>
        <position position="157"/>
    </location>
    <ligand>
        <name>Na(+)</name>
        <dbReference type="ChEBI" id="CHEBI:29101"/>
    </ligand>
</feature>
<feature type="binding site" evidence="1">
    <location>
        <position position="160"/>
    </location>
    <ligand>
        <name>Na(+)</name>
        <dbReference type="ChEBI" id="CHEBI:29101"/>
    </ligand>
</feature>
<feature type="binding site" evidence="1">
    <location>
        <position position="163"/>
    </location>
    <ligand>
        <name>Na(+)</name>
        <dbReference type="ChEBI" id="CHEBI:29101"/>
    </ligand>
</feature>
<proteinExistence type="inferred from homology"/>
<reference key="1">
    <citation type="submission" date="2008-02" db="EMBL/GenBank/DDBJ databases">
        <title>Complete sequence of Escherichia coli C str. ATCC 8739.</title>
        <authorList>
            <person name="Copeland A."/>
            <person name="Lucas S."/>
            <person name="Lapidus A."/>
            <person name="Glavina del Rio T."/>
            <person name="Dalin E."/>
            <person name="Tice H."/>
            <person name="Bruce D."/>
            <person name="Goodwin L."/>
            <person name="Pitluck S."/>
            <person name="Kiss H."/>
            <person name="Brettin T."/>
            <person name="Detter J.C."/>
            <person name="Han C."/>
            <person name="Kuske C.R."/>
            <person name="Schmutz J."/>
            <person name="Larimer F."/>
            <person name="Land M."/>
            <person name="Hauser L."/>
            <person name="Kyrpides N."/>
            <person name="Mikhailova N."/>
            <person name="Ingram L."/>
            <person name="Richardson P."/>
        </authorList>
    </citation>
    <scope>NUCLEOTIDE SEQUENCE [LARGE SCALE GENOMIC DNA]</scope>
    <source>
        <strain>ATCC 8739 / DSM 1576 / NBRC 3972 / NCIMB 8545 / WDCM 00012 / Crooks</strain>
    </source>
</reference>
<accession>B1IVE7</accession>
<evidence type="ECO:0000255" key="1">
    <source>
        <dbReference type="HAMAP-Rule" id="MF_00248"/>
    </source>
</evidence>
<protein>
    <recommendedName>
        <fullName evidence="1">ATP-dependent protease subunit HslV</fullName>
        <ecNumber evidence="1">3.4.25.2</ecNumber>
    </recommendedName>
    <alternativeName>
        <fullName evidence="1">Heat shock protein HslV</fullName>
    </alternativeName>
</protein>